<sequence length="1415" mass="154937">MVELGFPAYGPAIEKRVRPLYKALCDWRAAVTLAARRRFQQLRCNANMDDDGQPMFPPLPVPDWNNPSTDWRPSPPRSGPKKDFCGDLPAPLTSGPRLTTPSSGRMSELPHTTSSPRSSPRPRGPETSPSNEHIIISPPRNPPSNTTHRNVGHVSRSPSSSSSSSSSSSPSSSSLIVLSSPSSSRSPSPSPPRPRADSSSRPRRGRGSNRGGRSGPQSKGRKASPRTRKLEDEDYLPQETANRRGGGRPRGRPPKSGRAVQRNDIQVTSSSGLADTSPYDLCGSVWWEVPLPPPGRCWFGGLGGHRQALTDSPEIVEAIHRFNTSHGPVPVYVEEMKDYAKQYDALVNSLFHKSMKVNPLNWMHHGKLSPADAALNHIYVQKFQSSYDSPGAAVTGTVNRCIPHIAGAMKERKLLWAFPHIAASIAMTRRYCKDQKTFLFRSLKKAYASMAFPDNSSETEKGISSKPSTSPSVLITTSTQTTASPHAPKIDVTAIHGRVYQSVVDLSRCLADGSLDDPEFSFAGCTRPDCCVEEFDAARPLEELADACVLACDSVVAALLCGPDGPHRVAKMLSFYDSRITPHVPDSQQWEKCRILLVSWYNELSDLRAAVYGAYGNTPTSQHLDERALAARVVSLIAETIGPLVRQDPDRAWVRMGSRDITSLLLRDWRGTNDGDPGLVKAKHLRRTAELLNDGRSSKGTYGVFAPPRRPDQLFRGPGRPRRSTSSSQSASDKSPIKSTHRHTSDPIPISTPRPERDPAGTPHENTMSGPVQPAANGHSCSSTPTPAKKGNKTSSDTISLKDPTKTRIKASAKAQTDETLPETSTAHPSAMDQSSSLERKTLYTGPAVSSKERRRSAQSSTPSDIGGVSRKRKSAPEQYKQGLQTPLPMPEPSVGQTLLDPTTTTHDILSSSLPNRSCSSSPSPSKRPYHPSCYSPTDIMTGALVGPRGRQDRAAFRQFPVGTVIGQTPPQSVLNAYCPNGAFVELVEFARIPEPWQEVLRYSPEAMADIARVANALPGKYNSNEIITSAASEAFHTATSKLRARTAWMRYQQESPDDVSIVVLYSPLPGEHLFCVPAPDTPPGGLKFDNKRGGLSFLLAAFSNRLCLPKSSAWAGRWKAAPDISPLTRMGVLFLSTEDLGYQGAVEYLQRQCMKRKKKLIIMDTVEDRYRLPNGPCIIEEATRYMKCIISPRSQCCVRWPGLRDFGTTIITSRDVVGPLTLMDLEQYYYCEIGIEDSTINLCCTGNVRYTVETRLEDVSCVPTTPLFYFAAVKHVRPDFLCGETYSNRAARKWGLCAPLRPIYVIESKMNAIVSPSFLHPTARNLCRSVILPPDPEARPVVVHIPEGTCSALAEDMVASIRSSCITWGQHEEGGPETTAQENSDIRAMKVRPPTKPPYMSPLNIGNRDTTFTD</sequence>
<name>ICP4_GAHVG</name>
<evidence type="ECO:0000256" key="1">
    <source>
        <dbReference type="SAM" id="MobiDB-lite"/>
    </source>
</evidence>
<evidence type="ECO:0000305" key="2"/>
<accession>Q02362</accession>
<dbReference type="EMBL" id="M75729">
    <property type="protein sequence ID" value="AAA46111.1"/>
    <property type="molecule type" value="Genomic_DNA"/>
</dbReference>
<dbReference type="SMR" id="Q02362"/>
<dbReference type="GO" id="GO:0042025">
    <property type="term" value="C:host cell nucleus"/>
    <property type="evidence" value="ECO:0007669"/>
    <property type="project" value="UniProtKB-SubCell"/>
</dbReference>
<dbReference type="GO" id="GO:0003677">
    <property type="term" value="F:DNA binding"/>
    <property type="evidence" value="ECO:0007669"/>
    <property type="project" value="UniProtKB-KW"/>
</dbReference>
<dbReference type="GO" id="GO:0039695">
    <property type="term" value="P:DNA-templated viral transcription"/>
    <property type="evidence" value="ECO:0000250"/>
    <property type="project" value="UniProtKB"/>
</dbReference>
<dbReference type="GO" id="GO:0045893">
    <property type="term" value="P:positive regulation of DNA-templated transcription"/>
    <property type="evidence" value="ECO:0007669"/>
    <property type="project" value="InterPro"/>
</dbReference>
<dbReference type="InterPro" id="IPR005205">
    <property type="entry name" value="Herpes_ICP4_C"/>
</dbReference>
<dbReference type="InterPro" id="IPR005206">
    <property type="entry name" value="Herpes_ICP4_N"/>
</dbReference>
<dbReference type="Pfam" id="PF03585">
    <property type="entry name" value="Herpes_ICP4_C"/>
    <property type="match status" value="1"/>
</dbReference>
<dbReference type="Pfam" id="PF03584">
    <property type="entry name" value="Herpes_ICP4_N"/>
    <property type="match status" value="1"/>
</dbReference>
<proteinExistence type="inferred from homology"/>
<keyword id="KW-0010">Activator</keyword>
<keyword id="KW-0238">DNA-binding</keyword>
<keyword id="KW-0244">Early protein</keyword>
<keyword id="KW-1048">Host nucleus</keyword>
<keyword id="KW-0597">Phosphoprotein</keyword>
<keyword id="KW-0804">Transcription</keyword>
<keyword id="KW-0805">Transcription regulation</keyword>
<reference key="1">
    <citation type="journal article" date="1992" name="Virology">
        <title>Complete nucleotide sequence of the Marek's disease virus ICP4 gene.</title>
        <authorList>
            <person name="Anderson A.S."/>
            <person name="Francesconi A."/>
            <person name="Morgan R.W."/>
        </authorList>
    </citation>
    <scope>NUCLEOTIDE SEQUENCE [GENOMIC DNA]</scope>
</reference>
<protein>
    <recommendedName>
        <fullName>Major viral transcription factor ICP4 homolog</fullName>
    </recommendedName>
    <alternativeName>
        <fullName>Immediate-early protein IE175</fullName>
    </alternativeName>
</protein>
<gene>
    <name type="primary">ICP4</name>
</gene>
<organismHost>
    <name type="scientific">Gallus gallus</name>
    <name type="common">Chicken</name>
    <dbReference type="NCBI Taxonomy" id="9031"/>
</organismHost>
<comment type="function">
    <text>This IE protein is a multifunctional protein capable of migrating to the nucleus, binding to DNA, trans-activating other viral genes, and autoregulating its own synthesis. It is required for the switch from immediate-early to early mode of gene expression.</text>
</comment>
<comment type="subcellular location">
    <subcellularLocation>
        <location>Host nucleus</location>
    </subcellularLocation>
</comment>
<comment type="PTM">
    <text>A long stretch of serine residues may be a major site of phosphorylation.</text>
</comment>
<comment type="similarity">
    <text evidence="2">Belongs to the herpesviridae ICP4 family.</text>
</comment>
<organism>
    <name type="scientific">Gallid herpesvirus 2 (strain GA)</name>
    <name type="common">GaHV-2</name>
    <name type="synonym">Marek's disease herpesvirus type 1</name>
    <dbReference type="NCBI Taxonomy" id="10388"/>
    <lineage>
        <taxon>Viruses</taxon>
        <taxon>Duplodnaviria</taxon>
        <taxon>Heunggongvirae</taxon>
        <taxon>Peploviricota</taxon>
        <taxon>Herviviricetes</taxon>
        <taxon>Herpesvirales</taxon>
        <taxon>Orthoherpesviridae</taxon>
        <taxon>Alphaherpesvirinae</taxon>
        <taxon>Mardivirus</taxon>
        <taxon>Mardivirus gallidalpha2</taxon>
        <taxon>Gallid alphaherpesvirus 2</taxon>
    </lineage>
</organism>
<feature type="chain" id="PRO_0000115819" description="Major viral transcription factor ICP4 homolog">
    <location>
        <begin position="1"/>
        <end position="1415"/>
    </location>
</feature>
<feature type="region of interest" description="Disordered" evidence="1">
    <location>
        <begin position="48"/>
        <end position="272"/>
    </location>
</feature>
<feature type="region of interest" description="Disordered" evidence="1">
    <location>
        <begin position="454"/>
        <end position="480"/>
    </location>
</feature>
<feature type="region of interest" description="Disordered" evidence="1">
    <location>
        <begin position="691"/>
        <end position="935"/>
    </location>
</feature>
<feature type="region of interest" description="Disordered" evidence="1">
    <location>
        <begin position="1371"/>
        <end position="1415"/>
    </location>
</feature>
<feature type="compositionally biased region" description="Polar residues" evidence="1">
    <location>
        <begin position="96"/>
        <end position="105"/>
    </location>
</feature>
<feature type="compositionally biased region" description="Low complexity" evidence="1">
    <location>
        <begin position="125"/>
        <end position="187"/>
    </location>
</feature>
<feature type="compositionally biased region" description="Basic residues" evidence="1">
    <location>
        <begin position="245"/>
        <end position="255"/>
    </location>
</feature>
<feature type="compositionally biased region" description="Polar residues" evidence="1">
    <location>
        <begin position="263"/>
        <end position="272"/>
    </location>
</feature>
<feature type="compositionally biased region" description="Polar residues" evidence="1">
    <location>
        <begin position="465"/>
        <end position="480"/>
    </location>
</feature>
<feature type="compositionally biased region" description="Low complexity" evidence="1">
    <location>
        <begin position="724"/>
        <end position="738"/>
    </location>
</feature>
<feature type="compositionally biased region" description="Polar residues" evidence="1">
    <location>
        <begin position="814"/>
        <end position="837"/>
    </location>
</feature>
<feature type="compositionally biased region" description="Polar residues" evidence="1">
    <location>
        <begin position="895"/>
        <end position="910"/>
    </location>
</feature>
<feature type="compositionally biased region" description="Low complexity" evidence="1">
    <location>
        <begin position="911"/>
        <end position="933"/>
    </location>
</feature>